<keyword id="KW-0007">Acetylation</keyword>
<keyword id="KW-0025">Alternative splicing</keyword>
<keyword id="KW-0903">Direct protein sequencing</keyword>
<keyword id="KW-0238">DNA-binding</keyword>
<keyword id="KW-1017">Isopeptide bond</keyword>
<keyword id="KW-0488">Methylation</keyword>
<keyword id="KW-0539">Nucleus</keyword>
<keyword id="KW-0597">Phosphoprotein</keyword>
<keyword id="KW-1267">Proteomics identification</keyword>
<keyword id="KW-1185">Reference proteome</keyword>
<keyword id="KW-0678">Repressor</keyword>
<keyword id="KW-0694">RNA-binding</keyword>
<keyword id="KW-0804">Transcription</keyword>
<keyword id="KW-0805">Transcription regulation</keyword>
<keyword id="KW-0832">Ubl conjugation</keyword>
<gene>
    <name type="primary">SAFB</name>
    <name type="synonym">HAP</name>
    <name type="synonym">HET</name>
    <name type="synonym">SAFB1</name>
</gene>
<organism>
    <name type="scientific">Homo sapiens</name>
    <name type="common">Human</name>
    <dbReference type="NCBI Taxonomy" id="9606"/>
    <lineage>
        <taxon>Eukaryota</taxon>
        <taxon>Metazoa</taxon>
        <taxon>Chordata</taxon>
        <taxon>Craniata</taxon>
        <taxon>Vertebrata</taxon>
        <taxon>Euteleostomi</taxon>
        <taxon>Mammalia</taxon>
        <taxon>Eutheria</taxon>
        <taxon>Euarchontoglires</taxon>
        <taxon>Primates</taxon>
        <taxon>Haplorrhini</taxon>
        <taxon>Catarrhini</taxon>
        <taxon>Hominidae</taxon>
        <taxon>Homo</taxon>
    </lineage>
</organism>
<comment type="function">
    <text evidence="1 7 12">Binds to scaffold/matrix attachment region (S/MAR) DNA and forms a molecular assembly point to allow the formation of a 'transcriptosomal' complex (consisting of SR proteins and RNA polymerase II) coupling transcription and RNA processing (PubMed:9671816). Functions as an estrogen receptor corepressor and can also bind to the HSP27 promoter and decrease its transcription (PubMed:12660241). Thereby acts as a negative regulator of cell proliferation (PubMed:12660241). When associated with RBMX, binds to and stimulates transcription from the SREBF1 promoter (By similarity).</text>
</comment>
<comment type="subunit">
    <text evidence="1 2 7 8 10 11 12">Monomer and homodimer (PubMed:12660241). Forms heterodimers with SAFB2 (PubMed:12660241). Interacts with KHDRBS3 (By similarity). Interacts with CLK2 (By similarity). Interacts with POLR2A, SRSF1/ASF, SRSF9/SRp30c and SFSF10/TRA2B (PubMed:9671816). Interacts with isoform 1 and isoform 2 of SRPK1 and inhibits its activity (PubMed:19674106). Interacts with RBMX (By similarity). Interacts with FUS (PubMed:27731383). Interacts with ZBED4 (PubMed:22693546).</text>
</comment>
<comment type="interaction">
    <interactant intactId="EBI-348298">
        <id>Q15424</id>
    </interactant>
    <interactant intactId="EBI-400434">
        <id>P35637</id>
        <label>FUS</label>
    </interactant>
    <organismsDiffer>false</organismsDiffer>
    <experiments>8</experiments>
</comment>
<comment type="interaction">
    <interactant intactId="EBI-348298">
        <id>Q15424</id>
    </interactant>
    <interactant intactId="EBI-373144">
        <id>Q9GZQ8</id>
        <label>MAP1LC3B</label>
    </interactant>
    <organismsDiffer>false</organismsDiffer>
    <experiments>3</experiments>
</comment>
<comment type="interaction">
    <interactant intactId="EBI-348298">
        <id>Q15424</id>
    </interactant>
    <interactant intactId="EBI-352869">
        <id>Q14151</id>
        <label>SAFB2</label>
    </interactant>
    <organismsDiffer>false</organismsDiffer>
    <experiments>3</experiments>
</comment>
<comment type="interaction">
    <interactant intactId="EBI-348298">
        <id>Q15424</id>
    </interactant>
    <interactant intactId="EBI-5773439">
        <id>Q96SB4-2</id>
        <label>SRPK1</label>
    </interactant>
    <organismsDiffer>false</organismsDiffer>
    <experiments>2</experiments>
</comment>
<comment type="interaction">
    <interactant intactId="EBI-348298">
        <id>Q15424</id>
    </interactant>
    <interactant intactId="EBI-7160164">
        <id>Q96SB4-3</id>
        <label>SRPK1</label>
    </interactant>
    <organismsDiffer>false</organismsDiffer>
    <experiments>2</experiments>
</comment>
<comment type="interaction">
    <interactant intactId="EBI-348298">
        <id>Q15424</id>
    </interactant>
    <interactant intactId="EBI-366083">
        <id>P04637</id>
        <label>TP53</label>
    </interactant>
    <organismsDiffer>false</organismsDiffer>
    <experiments>5</experiments>
</comment>
<comment type="interaction">
    <interactant intactId="EBI-348298">
        <id>Q15424</id>
    </interactant>
    <interactant intactId="EBI-6452221">
        <id>Q9JKL7</id>
        <label>Srek1</label>
    </interactant>
    <organismsDiffer>true</organismsDiffer>
    <experiments>3</experiments>
</comment>
<comment type="subcellular location">
    <subcellularLocation>
        <location evidence="8 10">Nucleus</location>
    </subcellularLocation>
</comment>
<comment type="alternative products">
    <event type="alternative splicing"/>
    <isoform>
        <id>Q15424-1</id>
        <name>1</name>
        <sequence type="displayed"/>
    </isoform>
    <isoform>
        <id>Q15424-2</id>
        <name>2</name>
        <sequence type="described" ref="VSP_045838 VSP_045839"/>
    </isoform>
    <isoform>
        <id>Q15424-3</id>
        <name>3</name>
        <sequence type="described" ref="VSP_045839"/>
    </isoform>
    <isoform>
        <id>Q15424-4</id>
        <name>4</name>
        <sequence type="described" ref="VSP_046902 VSP_045839"/>
    </isoform>
</comment>
<comment type="tissue specificity">
    <text>Ubiquitous. Expressed at high levels in the CNS and at low levels in the liver. Expressed in a wide number of breast cancer cell lines.</text>
</comment>
<comment type="PTM">
    <text evidence="9">Sumoylated by PIAS1 with SUMO1 and SUMO2/3, desumoylated by SENP1. Sumoylation is required for transcriptional repressor activity.</text>
</comment>
<comment type="sequence caution" evidence="17">
    <conflict type="erroneous initiation">
        <sequence resource="EMBL-CDS" id="BAD92017"/>
    </conflict>
</comment>
<reference key="1">
    <citation type="journal article" date="1997" name="J. Cell. Biochem.">
        <title>Novel nuclear matrix protein HET binds to and influences activity of the HSP27 promoter in human breast cancer cells.</title>
        <authorList>
            <person name="Oesterreich S."/>
            <person name="Lee A.V."/>
            <person name="Sullivan T.M."/>
            <person name="Samuel S.K."/>
            <person name="Davie J.R."/>
            <person name="Fuqua S.A.W."/>
        </authorList>
    </citation>
    <scope>NUCLEOTIDE SEQUENCE [MRNA] (ISOFORM 1)</scope>
    <scope>CHARACTERIZATION</scope>
    <source>
        <tissue>Mammary carcinoma</tissue>
    </source>
</reference>
<reference key="2">
    <citation type="journal article" date="2004" name="Nat. Genet.">
        <title>Complete sequencing and characterization of 21,243 full-length human cDNAs.</title>
        <authorList>
            <person name="Ota T."/>
            <person name="Suzuki Y."/>
            <person name="Nishikawa T."/>
            <person name="Otsuki T."/>
            <person name="Sugiyama T."/>
            <person name="Irie R."/>
            <person name="Wakamatsu A."/>
            <person name="Hayashi K."/>
            <person name="Sato H."/>
            <person name="Nagai K."/>
            <person name="Kimura K."/>
            <person name="Makita H."/>
            <person name="Sekine M."/>
            <person name="Obayashi M."/>
            <person name="Nishi T."/>
            <person name="Shibahara T."/>
            <person name="Tanaka T."/>
            <person name="Ishii S."/>
            <person name="Yamamoto J."/>
            <person name="Saito K."/>
            <person name="Kawai Y."/>
            <person name="Isono Y."/>
            <person name="Nakamura Y."/>
            <person name="Nagahari K."/>
            <person name="Murakami K."/>
            <person name="Yasuda T."/>
            <person name="Iwayanagi T."/>
            <person name="Wagatsuma M."/>
            <person name="Shiratori A."/>
            <person name="Sudo H."/>
            <person name="Hosoiri T."/>
            <person name="Kaku Y."/>
            <person name="Kodaira H."/>
            <person name="Kondo H."/>
            <person name="Sugawara M."/>
            <person name="Takahashi M."/>
            <person name="Kanda K."/>
            <person name="Yokoi T."/>
            <person name="Furuya T."/>
            <person name="Kikkawa E."/>
            <person name="Omura Y."/>
            <person name="Abe K."/>
            <person name="Kamihara K."/>
            <person name="Katsuta N."/>
            <person name="Sato K."/>
            <person name="Tanikawa M."/>
            <person name="Yamazaki M."/>
            <person name="Ninomiya K."/>
            <person name="Ishibashi T."/>
            <person name="Yamashita H."/>
            <person name="Murakawa K."/>
            <person name="Fujimori K."/>
            <person name="Tanai H."/>
            <person name="Kimata M."/>
            <person name="Watanabe M."/>
            <person name="Hiraoka S."/>
            <person name="Chiba Y."/>
            <person name="Ishida S."/>
            <person name="Ono Y."/>
            <person name="Takiguchi S."/>
            <person name="Watanabe S."/>
            <person name="Yosida M."/>
            <person name="Hotuta T."/>
            <person name="Kusano J."/>
            <person name="Kanehori K."/>
            <person name="Takahashi-Fujii A."/>
            <person name="Hara H."/>
            <person name="Tanase T.-O."/>
            <person name="Nomura Y."/>
            <person name="Togiya S."/>
            <person name="Komai F."/>
            <person name="Hara R."/>
            <person name="Takeuchi K."/>
            <person name="Arita M."/>
            <person name="Imose N."/>
            <person name="Musashino K."/>
            <person name="Yuuki H."/>
            <person name="Oshima A."/>
            <person name="Sasaki N."/>
            <person name="Aotsuka S."/>
            <person name="Yoshikawa Y."/>
            <person name="Matsunawa H."/>
            <person name="Ichihara T."/>
            <person name="Shiohata N."/>
            <person name="Sano S."/>
            <person name="Moriya S."/>
            <person name="Momiyama H."/>
            <person name="Satoh N."/>
            <person name="Takami S."/>
            <person name="Terashima Y."/>
            <person name="Suzuki O."/>
            <person name="Nakagawa S."/>
            <person name="Senoh A."/>
            <person name="Mizoguchi H."/>
            <person name="Goto Y."/>
            <person name="Shimizu F."/>
            <person name="Wakebe H."/>
            <person name="Hishigaki H."/>
            <person name="Watanabe T."/>
            <person name="Sugiyama A."/>
            <person name="Takemoto M."/>
            <person name="Kawakami B."/>
            <person name="Yamazaki M."/>
            <person name="Watanabe K."/>
            <person name="Kumagai A."/>
            <person name="Itakura S."/>
            <person name="Fukuzumi Y."/>
            <person name="Fujimori Y."/>
            <person name="Komiyama M."/>
            <person name="Tashiro H."/>
            <person name="Tanigami A."/>
            <person name="Fujiwara T."/>
            <person name="Ono T."/>
            <person name="Yamada K."/>
            <person name="Fujii Y."/>
            <person name="Ozaki K."/>
            <person name="Hirao M."/>
            <person name="Ohmori Y."/>
            <person name="Kawabata A."/>
            <person name="Hikiji T."/>
            <person name="Kobatake N."/>
            <person name="Inagaki H."/>
            <person name="Ikema Y."/>
            <person name="Okamoto S."/>
            <person name="Okitani R."/>
            <person name="Kawakami T."/>
            <person name="Noguchi S."/>
            <person name="Itoh T."/>
            <person name="Shigeta K."/>
            <person name="Senba T."/>
            <person name="Matsumura K."/>
            <person name="Nakajima Y."/>
            <person name="Mizuno T."/>
            <person name="Morinaga M."/>
            <person name="Sasaki M."/>
            <person name="Togashi T."/>
            <person name="Oyama M."/>
            <person name="Hata H."/>
            <person name="Watanabe M."/>
            <person name="Komatsu T."/>
            <person name="Mizushima-Sugano J."/>
            <person name="Satoh T."/>
            <person name="Shirai Y."/>
            <person name="Takahashi Y."/>
            <person name="Nakagawa K."/>
            <person name="Okumura K."/>
            <person name="Nagase T."/>
            <person name="Nomura N."/>
            <person name="Kikuchi H."/>
            <person name="Masuho Y."/>
            <person name="Yamashita R."/>
            <person name="Nakai K."/>
            <person name="Yada T."/>
            <person name="Nakamura Y."/>
            <person name="Ohara O."/>
            <person name="Isogai T."/>
            <person name="Sugano S."/>
        </authorList>
    </citation>
    <scope>NUCLEOTIDE SEQUENCE [LARGE SCALE MRNA] (ISOFORM 2)</scope>
</reference>
<reference key="3">
    <citation type="journal article" date="2004" name="Nature">
        <title>The DNA sequence and biology of human chromosome 19.</title>
        <authorList>
            <person name="Grimwood J."/>
            <person name="Gordon L.A."/>
            <person name="Olsen A.S."/>
            <person name="Terry A."/>
            <person name="Schmutz J."/>
            <person name="Lamerdin J.E."/>
            <person name="Hellsten U."/>
            <person name="Goodstein D."/>
            <person name="Couronne O."/>
            <person name="Tran-Gyamfi M."/>
            <person name="Aerts A."/>
            <person name="Altherr M."/>
            <person name="Ashworth L."/>
            <person name="Bajorek E."/>
            <person name="Black S."/>
            <person name="Branscomb E."/>
            <person name="Caenepeel S."/>
            <person name="Carrano A.V."/>
            <person name="Caoile C."/>
            <person name="Chan Y.M."/>
            <person name="Christensen M."/>
            <person name="Cleland C.A."/>
            <person name="Copeland A."/>
            <person name="Dalin E."/>
            <person name="Dehal P."/>
            <person name="Denys M."/>
            <person name="Detter J.C."/>
            <person name="Escobar J."/>
            <person name="Flowers D."/>
            <person name="Fotopulos D."/>
            <person name="Garcia C."/>
            <person name="Georgescu A.M."/>
            <person name="Glavina T."/>
            <person name="Gomez M."/>
            <person name="Gonzales E."/>
            <person name="Groza M."/>
            <person name="Hammon N."/>
            <person name="Hawkins T."/>
            <person name="Haydu L."/>
            <person name="Ho I."/>
            <person name="Huang W."/>
            <person name="Israni S."/>
            <person name="Jett J."/>
            <person name="Kadner K."/>
            <person name="Kimball H."/>
            <person name="Kobayashi A."/>
            <person name="Larionov V."/>
            <person name="Leem S.-H."/>
            <person name="Lopez F."/>
            <person name="Lou Y."/>
            <person name="Lowry S."/>
            <person name="Malfatti S."/>
            <person name="Martinez D."/>
            <person name="McCready P.M."/>
            <person name="Medina C."/>
            <person name="Morgan J."/>
            <person name="Nelson K."/>
            <person name="Nolan M."/>
            <person name="Ovcharenko I."/>
            <person name="Pitluck S."/>
            <person name="Pollard M."/>
            <person name="Popkie A.P."/>
            <person name="Predki P."/>
            <person name="Quan G."/>
            <person name="Ramirez L."/>
            <person name="Rash S."/>
            <person name="Retterer J."/>
            <person name="Rodriguez A."/>
            <person name="Rogers S."/>
            <person name="Salamov A."/>
            <person name="Salazar A."/>
            <person name="She X."/>
            <person name="Smith D."/>
            <person name="Slezak T."/>
            <person name="Solovyev V."/>
            <person name="Thayer N."/>
            <person name="Tice H."/>
            <person name="Tsai M."/>
            <person name="Ustaszewska A."/>
            <person name="Vo N."/>
            <person name="Wagner M."/>
            <person name="Wheeler J."/>
            <person name="Wu K."/>
            <person name="Xie G."/>
            <person name="Yang J."/>
            <person name="Dubchak I."/>
            <person name="Furey T.S."/>
            <person name="DeJong P."/>
            <person name="Dickson M."/>
            <person name="Gordon D."/>
            <person name="Eichler E.E."/>
            <person name="Pennacchio L.A."/>
            <person name="Richardson P."/>
            <person name="Stubbs L."/>
            <person name="Rokhsar D.S."/>
            <person name="Myers R.M."/>
            <person name="Rubin E.M."/>
            <person name="Lucas S.M."/>
        </authorList>
    </citation>
    <scope>NUCLEOTIDE SEQUENCE [LARGE SCALE GENOMIC DNA]</scope>
</reference>
<reference key="4">
    <citation type="journal article" date="2004" name="Genome Res.">
        <title>The status, quality, and expansion of the NIH full-length cDNA project: the Mammalian Gene Collection (MGC).</title>
        <authorList>
            <consortium name="The MGC Project Team"/>
        </authorList>
    </citation>
    <scope>NUCLEOTIDE SEQUENCE [LARGE SCALE MRNA] (ISOFORMS 3 AND 4)</scope>
    <source>
        <tissue>Brain</tissue>
    </source>
</reference>
<reference key="5">
    <citation type="submission" date="2005-03" db="EMBL/GenBank/DDBJ databases">
        <authorList>
            <person name="Totoki Y."/>
            <person name="Toyoda A."/>
            <person name="Takeda T."/>
            <person name="Sakaki Y."/>
            <person name="Tanaka A."/>
            <person name="Yokoyama S."/>
            <person name="Ohara O."/>
            <person name="Nagase T."/>
            <person name="Kikuno R.F."/>
        </authorList>
    </citation>
    <scope>NUCLEOTIDE SEQUENCE [LARGE SCALE MRNA] OF 1-753 (ISOFORM 4)</scope>
    <source>
        <tissue>Brain</tissue>
    </source>
</reference>
<reference key="6">
    <citation type="submission" date="2009-07" db="UniProtKB">
        <authorList>
            <person name="Bienvenut W.V."/>
            <person name="Matallanas D."/>
            <person name="Kolch W."/>
        </authorList>
    </citation>
    <scope>PROTEIN SEQUENCE OF 2-30; 419-428; 571-578 AND 601-612</scope>
    <scope>CLEAVAGE OF INITIATOR METHIONINE</scope>
    <scope>ACETYLATION AT ALA-2</scope>
    <scope>IDENTIFICATION BY MASS SPECTROMETRY</scope>
    <source>
        <tissue>Mammary carcinoma</tissue>
    </source>
</reference>
<reference key="7">
    <citation type="journal article" date="1996" name="Nucleic Acids Res.">
        <title>Purification and molecular cloning of the scaffold attachment factor B (SAF-B), a novel human nuclear protein that specifically binds to S/MAR-DNA.</title>
        <authorList>
            <person name="Renz A."/>
            <person name="Fackelmayer F.O."/>
        </authorList>
    </citation>
    <scope>NUCLEOTIDE SEQUENCE [MRNA] OF 52-915 (ISOFORM 1)</scope>
    <scope>CHARACTERIZATION</scope>
    <scope>PHOSPHORYLATION</scope>
    <source>
        <tissue>Cervix carcinoma</tissue>
    </source>
</reference>
<reference key="8">
    <citation type="journal article" date="1998" name="Nucleic Acids Res.">
        <title>SAF-B couples transcription and pre-mRNA splicing to SAR/MAR elements.</title>
        <authorList>
            <person name="Nayler O."/>
            <person name="Straetling W."/>
            <person name="Bourquin J.-P."/>
            <person name="Stagljar I."/>
            <person name="Lindemann L."/>
            <person name="Jasper H."/>
            <person name="Hartmann A.M."/>
            <person name="Fackelmeyer F.O."/>
            <person name="Ullrich A."/>
            <person name="Stamm S."/>
        </authorList>
    </citation>
    <scope>FUNCTION</scope>
    <scope>INTERACTION WITH POLR2A; SRSF1; SRFS9 AND SRFS10</scope>
</reference>
<reference key="9">
    <citation type="journal article" date="2001" name="J. Biol. Chem.">
        <title>Cloning and characterization of an alternatively spliced form of SR protein kinase 1 that interacts specifically with scaffold attachment factor-B.</title>
        <authorList>
            <person name="Nikolakaki E."/>
            <person name="Kohen R."/>
            <person name="Hartmann A.M."/>
            <person name="Stamm S."/>
            <person name="Georgatsou E."/>
            <person name="Giannakouros T."/>
        </authorList>
    </citation>
    <scope>INTERACTION WITH SRPK1</scope>
</reference>
<reference key="10">
    <citation type="journal article" date="2003" name="J. Biol. Chem.">
        <title>SAFB2, a new scaffold attachment factor homolog and estrogen receptor corepressor.</title>
        <authorList>
            <person name="Townson S.M."/>
            <person name="Dobrzycka K.M."/>
            <person name="Lee A.V."/>
            <person name="Air M."/>
            <person name="Deng W."/>
            <person name="Kang K."/>
            <person name="Jiang S."/>
            <person name="Kioka N."/>
            <person name="Michaelis K."/>
            <person name="Oesterreich S."/>
        </authorList>
    </citation>
    <scope>CHARACTERIZATION</scope>
    <scope>SUBUNIT</scope>
</reference>
<reference key="11">
    <citation type="journal article" date="2006" name="Cell">
        <title>Global, in vivo, and site-specific phosphorylation dynamics in signaling networks.</title>
        <authorList>
            <person name="Olsen J.V."/>
            <person name="Blagoev B."/>
            <person name="Gnad F."/>
            <person name="Macek B."/>
            <person name="Kumar C."/>
            <person name="Mortensen P."/>
            <person name="Mann M."/>
        </authorList>
    </citation>
    <scope>PHOSPHORYLATION [LARGE SCALE ANALYSIS] AT SER-604</scope>
    <scope>IDENTIFICATION BY MASS SPECTROMETRY [LARGE SCALE ANALYSIS]</scope>
    <source>
        <tissue>Cervix carcinoma</tissue>
    </source>
</reference>
<reference key="12">
    <citation type="journal article" date="2006" name="Nat. Biotechnol.">
        <title>A probability-based approach for high-throughput protein phosphorylation analysis and site localization.</title>
        <authorList>
            <person name="Beausoleil S.A."/>
            <person name="Villen J."/>
            <person name="Gerber S.A."/>
            <person name="Rush J."/>
            <person name="Gygi S.P."/>
        </authorList>
    </citation>
    <scope>PHOSPHORYLATION [LARGE SCALE ANALYSIS] AT SER-601 AND SER-604</scope>
    <scope>IDENTIFICATION BY MASS SPECTROMETRY [LARGE SCALE ANALYSIS]</scope>
    <source>
        <tissue>Cervix carcinoma</tissue>
    </source>
</reference>
<reference key="13">
    <citation type="journal article" date="2007" name="J. Proteome Res.">
        <title>Improved titanium dioxide enrichment of phosphopeptides from HeLa cells and high confident phosphopeptide identification by cross-validation of MS/MS and MS/MS/MS spectra.</title>
        <authorList>
            <person name="Yu L.R."/>
            <person name="Zhu Z."/>
            <person name="Chan K.C."/>
            <person name="Issaq H.J."/>
            <person name="Dimitrov D.S."/>
            <person name="Veenstra T.D."/>
        </authorList>
    </citation>
    <scope>PHOSPHORYLATION [LARGE SCALE ANALYSIS] AT SER-604</scope>
    <scope>IDENTIFICATION BY MASS SPECTROMETRY [LARGE SCALE ANALYSIS]</scope>
    <source>
        <tissue>Cervix carcinoma</tissue>
    </source>
</reference>
<reference key="14">
    <citation type="journal article" date="2008" name="Proc. Natl. Acad. Sci. U.S.A.">
        <title>A quantitative atlas of mitotic phosphorylation.</title>
        <authorList>
            <person name="Dephoure N."/>
            <person name="Zhou C."/>
            <person name="Villen J."/>
            <person name="Beausoleil S.A."/>
            <person name="Bakalarski C.E."/>
            <person name="Elledge S.J."/>
            <person name="Gygi S.P."/>
        </authorList>
    </citation>
    <scope>PHOSPHORYLATION [LARGE SCALE ANALYSIS] AT SER-55; SER-383 AND SER-384</scope>
    <scope>IDENTIFICATION BY MASS SPECTROMETRY [LARGE SCALE ANALYSIS]</scope>
    <source>
        <tissue>Cervix carcinoma</tissue>
    </source>
</reference>
<reference key="15">
    <citation type="journal article" date="2009" name="Anal. Chem.">
        <title>Lys-N and trypsin cover complementary parts of the phosphoproteome in a refined SCX-based approach.</title>
        <authorList>
            <person name="Gauci S."/>
            <person name="Helbig A.O."/>
            <person name="Slijper M."/>
            <person name="Krijgsveld J."/>
            <person name="Heck A.J."/>
            <person name="Mohammed S."/>
        </authorList>
    </citation>
    <scope>ACETYLATION [LARGE SCALE ANALYSIS] AT ALA-2</scope>
    <scope>CLEAVAGE OF INITIATOR METHIONINE [LARGE SCALE ANALYSIS]</scope>
    <scope>IDENTIFICATION BY MASS SPECTROMETRY [LARGE SCALE ANALYSIS]</scope>
</reference>
<reference key="16">
    <citation type="journal article" date="2009" name="FEBS J.">
        <title>The enzymatic activity of SR protein kinases 1 and 1a is negatively affected by interaction with scaffold attachment factors B1 and 2.</title>
        <authorList>
            <person name="Tsianou D."/>
            <person name="Nikolakaki E."/>
            <person name="Tzitzira A."/>
            <person name="Bonanou S."/>
            <person name="Giannakouros T."/>
            <person name="Georgatsou E."/>
        </authorList>
    </citation>
    <scope>INTERACTION WITH SRPK1</scope>
    <scope>SUBCELLULAR LOCATION</scope>
</reference>
<reference key="17">
    <citation type="journal article" date="2009" name="Sci. Signal.">
        <title>Quantitative phosphoproteomic analysis of T cell receptor signaling reveals system-wide modulation of protein-protein interactions.</title>
        <authorList>
            <person name="Mayya V."/>
            <person name="Lundgren D.H."/>
            <person name="Hwang S.-I."/>
            <person name="Rezaul K."/>
            <person name="Wu L."/>
            <person name="Eng J.K."/>
            <person name="Rodionov V."/>
            <person name="Han D.K."/>
        </authorList>
    </citation>
    <scope>IDENTIFICATION BY MASS SPECTROMETRY [LARGE SCALE ANALYSIS]</scope>
    <source>
        <tissue>Leukemic T-cell</tissue>
    </source>
</reference>
<reference key="18">
    <citation type="journal article" date="2009" name="Science">
        <title>Lysine acetylation targets protein complexes and co-regulates major cellular functions.</title>
        <authorList>
            <person name="Choudhary C."/>
            <person name="Kumar C."/>
            <person name="Gnad F."/>
            <person name="Nielsen M.L."/>
            <person name="Rehman M."/>
            <person name="Walther T.C."/>
            <person name="Olsen J.V."/>
            <person name="Mann M."/>
        </authorList>
    </citation>
    <scope>ACETYLATION [LARGE SCALE ANALYSIS] AT LYS-607</scope>
    <scope>IDENTIFICATION BY MASS SPECTROMETRY [LARGE SCALE ANALYSIS]</scope>
</reference>
<reference key="19">
    <citation type="journal article" date="2010" name="Sci. Signal.">
        <title>Quantitative phosphoproteomics reveals widespread full phosphorylation site occupancy during mitosis.</title>
        <authorList>
            <person name="Olsen J.V."/>
            <person name="Vermeulen M."/>
            <person name="Santamaria A."/>
            <person name="Kumar C."/>
            <person name="Miller M.L."/>
            <person name="Jensen L.J."/>
            <person name="Gnad F."/>
            <person name="Cox J."/>
            <person name="Jensen T.S."/>
            <person name="Nigg E.A."/>
            <person name="Brunak S."/>
            <person name="Mann M."/>
        </authorList>
    </citation>
    <scope>ACETYLATION [LARGE SCALE ANALYSIS] AT ALA-2</scope>
    <scope>PHOSPHORYLATION [LARGE SCALE ANALYSIS] AT SER-383; SER-384; SER-415; SER-580; SER-582; SER-601 AND SER-604</scope>
    <scope>CLEAVAGE OF INITIATOR METHIONINE [LARGE SCALE ANALYSIS]</scope>
    <scope>IDENTIFICATION BY MASS SPECTROMETRY [LARGE SCALE ANALYSIS]</scope>
    <source>
        <tissue>Cervix carcinoma</tissue>
    </source>
</reference>
<reference key="20">
    <citation type="journal article" date="2011" name="BMC Syst. Biol.">
        <title>Initial characterization of the human central proteome.</title>
        <authorList>
            <person name="Burkard T.R."/>
            <person name="Planyavsky M."/>
            <person name="Kaupe I."/>
            <person name="Breitwieser F.P."/>
            <person name="Buerckstuemmer T."/>
            <person name="Bennett K.L."/>
            <person name="Superti-Furga G."/>
            <person name="Colinge J."/>
        </authorList>
    </citation>
    <scope>IDENTIFICATION BY MASS SPECTROMETRY [LARGE SCALE ANALYSIS]</scope>
</reference>
<reference key="21">
    <citation type="journal article" date="2011" name="Biochem. Biophys. Res. Commun.">
        <title>Co-repressor activity of scaffold attachment factor B1 requires sumoylation.</title>
        <authorList>
            <person name="Garee J.P."/>
            <person name="Meyer R."/>
            <person name="Oesterreich S."/>
        </authorList>
    </citation>
    <scope>SUMOYLATION AT LYS-231 AND LYS-294</scope>
</reference>
<reference key="22">
    <citation type="journal article" date="2011" name="Sci. Signal.">
        <title>System-wide temporal characterization of the proteome and phosphoproteome of human embryonic stem cell differentiation.</title>
        <authorList>
            <person name="Rigbolt K.T."/>
            <person name="Prokhorova T.A."/>
            <person name="Akimov V."/>
            <person name="Henningsen J."/>
            <person name="Johansen P.T."/>
            <person name="Kratchmarova I."/>
            <person name="Kassem M."/>
            <person name="Mann M."/>
            <person name="Olsen J.V."/>
            <person name="Blagoev B."/>
        </authorList>
    </citation>
    <scope>ACETYLATION [LARGE SCALE ANALYSIS] AT ALA-2</scope>
    <scope>PHOSPHORYLATION [LARGE SCALE ANALYSIS] AT SER-383; SER-601 AND SER-604</scope>
    <scope>CLEAVAGE OF INITIATOR METHIONINE [LARGE SCALE ANALYSIS]</scope>
    <scope>IDENTIFICATION BY MASS SPECTROMETRY [LARGE SCALE ANALYSIS]</scope>
</reference>
<reference key="23">
    <citation type="journal article" date="2012" name="Mol. Cell. Proteomics">
        <title>Comparative large-scale characterisation of plant vs. mammal proteins reveals similar and idiosyncratic N-alpha acetylation features.</title>
        <authorList>
            <person name="Bienvenut W.V."/>
            <person name="Sumpton D."/>
            <person name="Martinez A."/>
            <person name="Lilla S."/>
            <person name="Espagne C."/>
            <person name="Meinnel T."/>
            <person name="Giglione C."/>
        </authorList>
    </citation>
    <scope>ACETYLATION [LARGE SCALE ANALYSIS] AT ALA-2</scope>
    <scope>CLEAVAGE OF INITIATOR METHIONINE [LARGE SCALE ANALYSIS]</scope>
    <scope>IDENTIFICATION BY MASS SPECTROMETRY [LARGE SCALE ANALYSIS]</scope>
</reference>
<reference key="24">
    <citation type="journal article" date="2012" name="PLoS ONE">
        <title>Sequence-specific binding of recombinant Zbed4 to DNA: insights into Zbed4 participation in gene transcription and its association with other proteins.</title>
        <authorList>
            <person name="Mokhonov V.V."/>
            <person name="Theendakara V.P."/>
            <person name="Gribanova Y.E."/>
            <person name="Ahmedli N.B."/>
            <person name="Farber D.B."/>
        </authorList>
    </citation>
    <scope>INTERACTION WITH ZBED4</scope>
    <scope>SUBCELLULAR LOCATION</scope>
</reference>
<reference key="25">
    <citation type="journal article" date="2012" name="Proc. Natl. Acad. Sci. U.S.A.">
        <title>N-terminal acetylome analyses and functional insights of the N-terminal acetyltransferase NatB.</title>
        <authorList>
            <person name="Van Damme P."/>
            <person name="Lasa M."/>
            <person name="Polevoda B."/>
            <person name="Gazquez C."/>
            <person name="Elosegui-Artola A."/>
            <person name="Kim D.S."/>
            <person name="De Juan-Pardo E."/>
            <person name="Demeyer K."/>
            <person name="Hole K."/>
            <person name="Larrea E."/>
            <person name="Timmerman E."/>
            <person name="Prieto J."/>
            <person name="Arnesen T."/>
            <person name="Sherman F."/>
            <person name="Gevaert K."/>
            <person name="Aldabe R."/>
        </authorList>
    </citation>
    <scope>ACETYLATION [LARGE SCALE ANALYSIS] AT ALA-2</scope>
    <scope>CLEAVAGE OF INITIATOR METHIONINE [LARGE SCALE ANALYSIS]</scope>
    <scope>IDENTIFICATION BY MASS SPECTROMETRY [LARGE SCALE ANALYSIS]</scope>
</reference>
<reference key="26">
    <citation type="journal article" date="2013" name="J. Proteome Res.">
        <title>Toward a comprehensive characterization of a human cancer cell phosphoproteome.</title>
        <authorList>
            <person name="Zhou H."/>
            <person name="Di Palma S."/>
            <person name="Preisinger C."/>
            <person name="Peng M."/>
            <person name="Polat A.N."/>
            <person name="Heck A.J."/>
            <person name="Mohammed S."/>
        </authorList>
    </citation>
    <scope>PHOSPHORYLATION [LARGE SCALE ANALYSIS] AT SER-55; SER-79; SER-580; SER-601 AND SER-604</scope>
    <scope>IDENTIFICATION BY MASS SPECTROMETRY [LARGE SCALE ANALYSIS]</scope>
    <source>
        <tissue>Cervix carcinoma</tissue>
        <tissue>Erythroleukemia</tissue>
    </source>
</reference>
<reference key="27">
    <citation type="journal article" date="2014" name="J. Proteomics">
        <title>An enzyme assisted RP-RPLC approach for in-depth analysis of human liver phosphoproteome.</title>
        <authorList>
            <person name="Bian Y."/>
            <person name="Song C."/>
            <person name="Cheng K."/>
            <person name="Dong M."/>
            <person name="Wang F."/>
            <person name="Huang J."/>
            <person name="Sun D."/>
            <person name="Wang L."/>
            <person name="Ye M."/>
            <person name="Zou H."/>
        </authorList>
    </citation>
    <scope>PHOSPHORYLATION [LARGE SCALE ANALYSIS] AT THR-188; SER-195; SER-197 AND SER-604</scope>
    <scope>IDENTIFICATION BY MASS SPECTROMETRY [LARGE SCALE ANALYSIS]</scope>
    <source>
        <tissue>Liver</tissue>
    </source>
</reference>
<reference key="28">
    <citation type="journal article" date="2014" name="Mol. Cell. Proteomics">
        <title>Immunoaffinity enrichment and mass spectrometry analysis of protein methylation.</title>
        <authorList>
            <person name="Guo A."/>
            <person name="Gu H."/>
            <person name="Zhou J."/>
            <person name="Mulhern D."/>
            <person name="Wang Y."/>
            <person name="Lee K.A."/>
            <person name="Yang V."/>
            <person name="Aguiar M."/>
            <person name="Kornhauser J."/>
            <person name="Jia X."/>
            <person name="Ren J."/>
            <person name="Beausoleil S.A."/>
            <person name="Silva J.C."/>
            <person name="Vemulapalli V."/>
            <person name="Bedford M.T."/>
            <person name="Comb M.J."/>
        </authorList>
    </citation>
    <scope>METHYLATION [LARGE SCALE ANALYSIS] AT ARG-811; ARG-868; ARG-874 AND ARG-884</scope>
    <scope>IDENTIFICATION BY MASS SPECTROMETRY [LARGE SCALE ANALYSIS]</scope>
    <source>
        <tissue>Colon carcinoma</tissue>
    </source>
</reference>
<reference key="29">
    <citation type="journal article" date="2014" name="Nat. Struct. Mol. Biol.">
        <title>Uncovering global SUMOylation signaling networks in a site-specific manner.</title>
        <authorList>
            <person name="Hendriks I.A."/>
            <person name="D'Souza R.C."/>
            <person name="Yang B."/>
            <person name="Verlaan-de Vries M."/>
            <person name="Mann M."/>
            <person name="Vertegaal A.C."/>
        </authorList>
    </citation>
    <scope>SUMOYLATION [LARGE SCALE ANALYSIS] AT LYS-172 AND LYS-543</scope>
    <scope>IDENTIFICATION BY MASS SPECTROMETRY [LARGE SCALE ANALYSIS]</scope>
</reference>
<reference key="30">
    <citation type="journal article" date="2014" name="Proc. Natl. Acad. Sci. U.S.A.">
        <title>Mapping of SUMO sites and analysis of SUMOylation changes induced by external stimuli.</title>
        <authorList>
            <person name="Impens F."/>
            <person name="Radoshevich L."/>
            <person name="Cossart P."/>
            <person name="Ribet D."/>
        </authorList>
    </citation>
    <scope>SUMOYLATION [LARGE SCALE ANALYSIS] AT LYS-578</scope>
    <scope>IDENTIFICATION BY MASS SPECTROMETRY [LARGE SCALE ANALYSIS]</scope>
</reference>
<reference key="31">
    <citation type="journal article" date="2015" name="Mol. Cell. Proteomics">
        <title>System-wide analysis of SUMOylation dynamics in response to replication stress reveals novel small ubiquitin-like modified target proteins and acceptor lysines relevant for genome stability.</title>
        <authorList>
            <person name="Xiao Z."/>
            <person name="Chang J.G."/>
            <person name="Hendriks I.A."/>
            <person name="Sigurdsson J.O."/>
            <person name="Olsen J.V."/>
            <person name="Vertegaal A.C."/>
        </authorList>
    </citation>
    <scope>SUMOYLATION [LARGE SCALE ANALYSIS] AT LYS-483; LYS-543 AND LYS-578</scope>
    <scope>IDENTIFICATION BY MASS SPECTROMETRY [LARGE SCALE ANALYSIS]</scope>
</reference>
<reference key="32">
    <citation type="journal article" date="2015" name="Proteomics">
        <title>N-terminome analysis of the human mitochondrial proteome.</title>
        <authorList>
            <person name="Vaca Jacome A.S."/>
            <person name="Rabilloud T."/>
            <person name="Schaeffer-Reiss C."/>
            <person name="Rompais M."/>
            <person name="Ayoub D."/>
            <person name="Lane L."/>
            <person name="Bairoch A."/>
            <person name="Van Dorsselaer A."/>
            <person name="Carapito C."/>
        </authorList>
    </citation>
    <scope>IDENTIFICATION BY MASS SPECTROMETRY [LARGE SCALE ANALYSIS]</scope>
</reference>
<reference key="33">
    <citation type="journal article" date="2016" name="Sci. Rep.">
        <title>FUS interacts with nuclear matrix-associated protein SAFB1 as well as Matrin3 to regulate splicing and ligand-mediated transcription.</title>
        <authorList>
            <person name="Yamaguchi A."/>
            <person name="Takanashi K."/>
        </authorList>
    </citation>
    <scope>INTERACTION WITH FUS</scope>
</reference>
<reference key="34">
    <citation type="journal article" date="2017" name="Nat. Struct. Mol. Biol.">
        <title>Site-specific mapping of the human SUMO proteome reveals co-modification with phosphorylation.</title>
        <authorList>
            <person name="Hendriks I.A."/>
            <person name="Lyon D."/>
            <person name="Young C."/>
            <person name="Jensen L.J."/>
            <person name="Vertegaal A.C."/>
            <person name="Nielsen M.L."/>
        </authorList>
    </citation>
    <scope>SUMOYLATION [LARGE SCALE ANALYSIS] AT LYS-172; LYS-186; LYS-381; LYS-392; LYS-483; LYS-514; LYS-543; LYS-570; LYS-578 AND LYS-847</scope>
    <scope>IDENTIFICATION BY MASS SPECTROMETRY [LARGE SCALE ANALYSIS]</scope>
</reference>
<evidence type="ECO:0000250" key="1">
    <source>
        <dbReference type="UniProtKB" id="D3YXK2"/>
    </source>
</evidence>
<evidence type="ECO:0000250" key="2">
    <source>
        <dbReference type="UniProtKB" id="O88453"/>
    </source>
</evidence>
<evidence type="ECO:0000255" key="3"/>
<evidence type="ECO:0000255" key="4">
    <source>
        <dbReference type="PROSITE-ProRule" id="PRU00176"/>
    </source>
</evidence>
<evidence type="ECO:0000255" key="5">
    <source>
        <dbReference type="PROSITE-ProRule" id="PRU00186"/>
    </source>
</evidence>
<evidence type="ECO:0000256" key="6">
    <source>
        <dbReference type="SAM" id="MobiDB-lite"/>
    </source>
</evidence>
<evidence type="ECO:0000269" key="7">
    <source>
    </source>
</evidence>
<evidence type="ECO:0000269" key="8">
    <source>
    </source>
</evidence>
<evidence type="ECO:0000269" key="9">
    <source>
    </source>
</evidence>
<evidence type="ECO:0000269" key="10">
    <source>
    </source>
</evidence>
<evidence type="ECO:0000269" key="11">
    <source>
    </source>
</evidence>
<evidence type="ECO:0000269" key="12">
    <source>
    </source>
</evidence>
<evidence type="ECO:0000269" key="13">
    <source ref="6"/>
</evidence>
<evidence type="ECO:0000303" key="14">
    <source>
    </source>
</evidence>
<evidence type="ECO:0000303" key="15">
    <source>
    </source>
</evidence>
<evidence type="ECO:0000303" key="16">
    <source ref="5"/>
</evidence>
<evidence type="ECO:0000305" key="17"/>
<evidence type="ECO:0007744" key="18">
    <source>
    </source>
</evidence>
<evidence type="ECO:0007744" key="19">
    <source>
    </source>
</evidence>
<evidence type="ECO:0007744" key="20">
    <source>
    </source>
</evidence>
<evidence type="ECO:0007744" key="21">
    <source>
    </source>
</evidence>
<evidence type="ECO:0007744" key="22">
    <source>
    </source>
</evidence>
<evidence type="ECO:0007744" key="23">
    <source>
    </source>
</evidence>
<evidence type="ECO:0007744" key="24">
    <source>
    </source>
</evidence>
<evidence type="ECO:0007744" key="25">
    <source>
    </source>
</evidence>
<evidence type="ECO:0007744" key="26">
    <source>
    </source>
</evidence>
<evidence type="ECO:0007744" key="27">
    <source>
    </source>
</evidence>
<evidence type="ECO:0007744" key="28">
    <source>
    </source>
</evidence>
<evidence type="ECO:0007744" key="29">
    <source>
    </source>
</evidence>
<evidence type="ECO:0007744" key="30">
    <source>
    </source>
</evidence>
<evidence type="ECO:0007744" key="31">
    <source>
    </source>
</evidence>
<evidence type="ECO:0007744" key="32">
    <source>
    </source>
</evidence>
<evidence type="ECO:0007744" key="33">
    <source>
    </source>
</evidence>
<evidence type="ECO:0007744" key="34">
    <source>
    </source>
</evidence>
<name>SAFB1_HUMAN</name>
<dbReference type="EMBL" id="U72355">
    <property type="protein sequence ID" value="AAC00056.1"/>
    <property type="molecule type" value="mRNA"/>
</dbReference>
<dbReference type="EMBL" id="AK298707">
    <property type="protein sequence ID" value="BAH12852.1"/>
    <property type="molecule type" value="mRNA"/>
</dbReference>
<dbReference type="EMBL" id="AC004611">
    <property type="protein sequence ID" value="AAC14667.1"/>
    <property type="molecule type" value="Genomic_DNA"/>
</dbReference>
<dbReference type="EMBL" id="AC011499">
    <property type="status" value="NOT_ANNOTATED_CDS"/>
    <property type="molecule type" value="Genomic_DNA"/>
</dbReference>
<dbReference type="EMBL" id="AC134303">
    <property type="status" value="NOT_ANNOTATED_CDS"/>
    <property type="molecule type" value="Genomic_DNA"/>
</dbReference>
<dbReference type="EMBL" id="BC126219">
    <property type="protein sequence ID" value="AAI26220.1"/>
    <property type="molecule type" value="mRNA"/>
</dbReference>
<dbReference type="EMBL" id="BC143937">
    <property type="protein sequence ID" value="AAI43938.1"/>
    <property type="molecule type" value="mRNA"/>
</dbReference>
<dbReference type="EMBL" id="BC143939">
    <property type="protein sequence ID" value="AAI43940.1"/>
    <property type="molecule type" value="mRNA"/>
</dbReference>
<dbReference type="EMBL" id="AB208780">
    <property type="protein sequence ID" value="BAD92017.1"/>
    <property type="status" value="ALT_INIT"/>
    <property type="molecule type" value="mRNA"/>
</dbReference>
<dbReference type="EMBL" id="L43631">
    <property type="protein sequence ID" value="AAC18697.1"/>
    <property type="molecule type" value="mRNA"/>
</dbReference>
<dbReference type="CCDS" id="CCDS12142.1">
    <molecule id="Q15424-1"/>
</dbReference>
<dbReference type="CCDS" id="CCDS56077.1">
    <molecule id="Q15424-2"/>
</dbReference>
<dbReference type="CCDS" id="CCDS59339.1">
    <molecule id="Q15424-3"/>
</dbReference>
<dbReference type="CCDS" id="CCDS59340.1">
    <molecule id="Q15424-4"/>
</dbReference>
<dbReference type="PIR" id="S64732">
    <property type="entry name" value="S64732"/>
</dbReference>
<dbReference type="RefSeq" id="NP_001188267.1">
    <molecule id="Q15424-3"/>
    <property type="nucleotide sequence ID" value="NM_001201338.2"/>
</dbReference>
<dbReference type="RefSeq" id="NP_001188268.1">
    <molecule id="Q15424-4"/>
    <property type="nucleotide sequence ID" value="NM_001201339.2"/>
</dbReference>
<dbReference type="RefSeq" id="NP_001188269.1">
    <molecule id="Q15424-2"/>
    <property type="nucleotide sequence ID" value="NM_001201340.2"/>
</dbReference>
<dbReference type="RefSeq" id="NP_001307500.1">
    <property type="nucleotide sequence ID" value="NM_001320571.1"/>
</dbReference>
<dbReference type="RefSeq" id="NP_001307501.1">
    <property type="nucleotide sequence ID" value="NM_001320572.1"/>
</dbReference>
<dbReference type="RefSeq" id="NP_002958.2">
    <molecule id="Q15424-1"/>
    <property type="nucleotide sequence ID" value="NM_002967.3"/>
</dbReference>
<dbReference type="SMR" id="Q15424"/>
<dbReference type="BioGRID" id="112201">
    <property type="interactions" value="257"/>
</dbReference>
<dbReference type="CORUM" id="Q15424"/>
<dbReference type="FunCoup" id="Q15424">
    <property type="interactions" value="3047"/>
</dbReference>
<dbReference type="IntAct" id="Q15424">
    <property type="interactions" value="117"/>
</dbReference>
<dbReference type="MINT" id="Q15424"/>
<dbReference type="STRING" id="9606.ENSP00000467423"/>
<dbReference type="GlyGen" id="Q15424">
    <property type="glycosylation" value="2 sites, 1 O-linked glycan (1 site)"/>
</dbReference>
<dbReference type="iPTMnet" id="Q15424"/>
<dbReference type="PhosphoSitePlus" id="Q15424"/>
<dbReference type="SwissPalm" id="Q15424"/>
<dbReference type="BioMuta" id="SAFB"/>
<dbReference type="DMDM" id="116242782"/>
<dbReference type="jPOST" id="Q15424"/>
<dbReference type="MassIVE" id="Q15424"/>
<dbReference type="PaxDb" id="9606-ENSP00000467423"/>
<dbReference type="PeptideAtlas" id="Q15424"/>
<dbReference type="ProteomicsDB" id="25341"/>
<dbReference type="ProteomicsDB" id="60586">
    <molecule id="Q15424-1"/>
</dbReference>
<dbReference type="Pumba" id="Q15424"/>
<dbReference type="Antibodypedia" id="4536">
    <property type="antibodies" value="308 antibodies from 32 providers"/>
</dbReference>
<dbReference type="DNASU" id="6294"/>
<dbReference type="Ensembl" id="ENST00000292123.9">
    <molecule id="Q15424-1"/>
    <property type="protein sequence ID" value="ENSP00000292123.4"/>
    <property type="gene ID" value="ENSG00000160633.13"/>
</dbReference>
<dbReference type="Ensembl" id="ENST00000454510.5">
    <molecule id="Q15424-2"/>
    <property type="protein sequence ID" value="ENSP00000415895.1"/>
    <property type="gene ID" value="ENSG00000160633.13"/>
</dbReference>
<dbReference type="Ensembl" id="ENST00000588852.2">
    <molecule id="Q15424-3"/>
    <property type="protein sequence ID" value="ENSP00000467423.1"/>
    <property type="gene ID" value="ENSG00000160633.13"/>
</dbReference>
<dbReference type="Ensembl" id="ENST00000592224.5">
    <molecule id="Q15424-4"/>
    <property type="protein sequence ID" value="ENSP00000464840.1"/>
    <property type="gene ID" value="ENSG00000160633.13"/>
</dbReference>
<dbReference type="GeneID" id="6294"/>
<dbReference type="KEGG" id="hsa:6294"/>
<dbReference type="MANE-Select" id="ENST00000588852.2">
    <molecule id="Q15424-3"/>
    <property type="protein sequence ID" value="ENSP00000467423.1"/>
    <property type="RefSeq nucleotide sequence ID" value="NM_001201338.2"/>
    <property type="RefSeq protein sequence ID" value="NP_001188267.1"/>
</dbReference>
<dbReference type="UCSC" id="uc002mce.5">
    <molecule id="Q15424-1"/>
    <property type="organism name" value="human"/>
</dbReference>
<dbReference type="AGR" id="HGNC:10520"/>
<dbReference type="CTD" id="6294"/>
<dbReference type="DisGeNET" id="6294"/>
<dbReference type="GeneCards" id="SAFB"/>
<dbReference type="HGNC" id="HGNC:10520">
    <property type="gene designation" value="SAFB"/>
</dbReference>
<dbReference type="HPA" id="ENSG00000160633">
    <property type="expression patterns" value="Low tissue specificity"/>
</dbReference>
<dbReference type="MIM" id="602895">
    <property type="type" value="gene"/>
</dbReference>
<dbReference type="neXtProt" id="NX_Q15424"/>
<dbReference type="OpenTargets" id="ENSG00000160633"/>
<dbReference type="PharmGKB" id="PA34928"/>
<dbReference type="VEuPathDB" id="HostDB:ENSG00000160633"/>
<dbReference type="eggNOG" id="KOG4661">
    <property type="taxonomic scope" value="Eukaryota"/>
</dbReference>
<dbReference type="GeneTree" id="ENSGT00940000155916"/>
<dbReference type="HOGENOM" id="CLU_015021_0_0_1"/>
<dbReference type="InParanoid" id="Q15424"/>
<dbReference type="OMA" id="ERSPRMC"/>
<dbReference type="OrthoDB" id="6159259at2759"/>
<dbReference type="PAN-GO" id="Q15424">
    <property type="GO annotations" value="5 GO annotations based on evolutionary models"/>
</dbReference>
<dbReference type="PhylomeDB" id="Q15424"/>
<dbReference type="TreeFam" id="TF325240"/>
<dbReference type="PathwayCommons" id="Q15424"/>
<dbReference type="Reactome" id="R-HSA-3899300">
    <property type="pathway name" value="SUMOylation of transcription cofactors"/>
</dbReference>
<dbReference type="SignaLink" id="Q15424"/>
<dbReference type="SIGNOR" id="Q15424"/>
<dbReference type="BioGRID-ORCS" id="6294">
    <property type="hits" value="101 hits in 1171 CRISPR screens"/>
</dbReference>
<dbReference type="CD-CODE" id="62EA6512">
    <property type="entry name" value="Sam68 nuclear body"/>
</dbReference>
<dbReference type="CD-CODE" id="81D2A7B6">
    <property type="entry name" value="Nuclear stress body"/>
</dbReference>
<dbReference type="CD-CODE" id="DEE660B4">
    <property type="entry name" value="Stress granule"/>
</dbReference>
<dbReference type="ChiTaRS" id="SAFB">
    <property type="organism name" value="human"/>
</dbReference>
<dbReference type="GeneWiki" id="SAFB"/>
<dbReference type="GenomeRNAi" id="6294"/>
<dbReference type="Pharos" id="Q15424">
    <property type="development level" value="Tbio"/>
</dbReference>
<dbReference type="PRO" id="PR:Q15424"/>
<dbReference type="Proteomes" id="UP000005640">
    <property type="component" value="Chromosome 19"/>
</dbReference>
<dbReference type="RNAct" id="Q15424">
    <property type="molecule type" value="protein"/>
</dbReference>
<dbReference type="Bgee" id="ENSG00000160633">
    <property type="expression patterns" value="Expressed in sural nerve and 209 other cell types or tissues"/>
</dbReference>
<dbReference type="ExpressionAtlas" id="Q15424">
    <property type="expression patterns" value="baseline and differential"/>
</dbReference>
<dbReference type="GO" id="GO:0030496">
    <property type="term" value="C:midbody"/>
    <property type="evidence" value="ECO:0000314"/>
    <property type="project" value="HPA"/>
</dbReference>
<dbReference type="GO" id="GO:0005654">
    <property type="term" value="C:nucleoplasm"/>
    <property type="evidence" value="ECO:0000314"/>
    <property type="project" value="HPA"/>
</dbReference>
<dbReference type="GO" id="GO:0005634">
    <property type="term" value="C:nucleus"/>
    <property type="evidence" value="ECO:0000314"/>
    <property type="project" value="UniProtKB"/>
</dbReference>
<dbReference type="GO" id="GO:0003682">
    <property type="term" value="F:chromatin binding"/>
    <property type="evidence" value="ECO:0000250"/>
    <property type="project" value="UniProtKB"/>
</dbReference>
<dbReference type="GO" id="GO:0003690">
    <property type="term" value="F:double-stranded DNA binding"/>
    <property type="evidence" value="ECO:0000304"/>
    <property type="project" value="ProtInc"/>
</dbReference>
<dbReference type="GO" id="GO:0003723">
    <property type="term" value="F:RNA binding"/>
    <property type="evidence" value="ECO:0007005"/>
    <property type="project" value="UniProtKB"/>
</dbReference>
<dbReference type="GO" id="GO:0000978">
    <property type="term" value="F:RNA polymerase II cis-regulatory region sequence-specific DNA binding"/>
    <property type="evidence" value="ECO:0000250"/>
    <property type="project" value="UniProtKB"/>
</dbReference>
<dbReference type="GO" id="GO:0043565">
    <property type="term" value="F:sequence-specific DNA binding"/>
    <property type="evidence" value="ECO:0000318"/>
    <property type="project" value="GO_Central"/>
</dbReference>
<dbReference type="GO" id="GO:0006325">
    <property type="term" value="P:chromatin organization"/>
    <property type="evidence" value="ECO:0000304"/>
    <property type="project" value="ProtInc"/>
</dbReference>
<dbReference type="GO" id="GO:0030520">
    <property type="term" value="P:estrogen receptor signaling pathway"/>
    <property type="evidence" value="ECO:0000318"/>
    <property type="project" value="GO_Central"/>
</dbReference>
<dbReference type="GO" id="GO:0060765">
    <property type="term" value="P:regulation of androgen receptor signaling pathway"/>
    <property type="evidence" value="ECO:0000318"/>
    <property type="project" value="GO_Central"/>
</dbReference>
<dbReference type="GO" id="GO:0050684">
    <property type="term" value="P:regulation of mRNA processing"/>
    <property type="evidence" value="ECO:0000318"/>
    <property type="project" value="GO_Central"/>
</dbReference>
<dbReference type="GO" id="GO:0006357">
    <property type="term" value="P:regulation of transcription by RNA polymerase II"/>
    <property type="evidence" value="ECO:0000318"/>
    <property type="project" value="GO_Central"/>
</dbReference>
<dbReference type="CDD" id="cd12679">
    <property type="entry name" value="RRM_SAFB1_SAFB2"/>
    <property type="match status" value="1"/>
</dbReference>
<dbReference type="FunFam" id="3.30.70.330:FF:000197">
    <property type="entry name" value="Scaffold attachment factor B2"/>
    <property type="match status" value="1"/>
</dbReference>
<dbReference type="FunFam" id="1.10.720.30:FF:000005">
    <property type="entry name" value="scaffold attachment factor B2 isoform X1"/>
    <property type="match status" value="1"/>
</dbReference>
<dbReference type="Gene3D" id="3.30.70.330">
    <property type="match status" value="1"/>
</dbReference>
<dbReference type="Gene3D" id="1.10.720.30">
    <property type="entry name" value="SAP domain"/>
    <property type="match status" value="1"/>
</dbReference>
<dbReference type="InterPro" id="IPR012677">
    <property type="entry name" value="Nucleotide-bd_a/b_plait_sf"/>
</dbReference>
<dbReference type="InterPro" id="IPR035979">
    <property type="entry name" value="RBD_domain_sf"/>
</dbReference>
<dbReference type="InterPro" id="IPR000504">
    <property type="entry name" value="RRM_dom"/>
</dbReference>
<dbReference type="InterPro" id="IPR051738">
    <property type="entry name" value="SAF_Modulators"/>
</dbReference>
<dbReference type="InterPro" id="IPR034781">
    <property type="entry name" value="SAFB1_2_RBD"/>
</dbReference>
<dbReference type="InterPro" id="IPR003034">
    <property type="entry name" value="SAP_dom"/>
</dbReference>
<dbReference type="InterPro" id="IPR036361">
    <property type="entry name" value="SAP_dom_sf"/>
</dbReference>
<dbReference type="PANTHER" id="PTHR15683">
    <property type="entry name" value="SCAFFOLD ATTACHMENT FACTOR B-RELATED"/>
    <property type="match status" value="1"/>
</dbReference>
<dbReference type="PANTHER" id="PTHR15683:SF6">
    <property type="entry name" value="SCAFFOLD ATTACHMENT FACTOR B1"/>
    <property type="match status" value="1"/>
</dbReference>
<dbReference type="Pfam" id="PF00076">
    <property type="entry name" value="RRM_1"/>
    <property type="match status" value="1"/>
</dbReference>
<dbReference type="Pfam" id="PF02037">
    <property type="entry name" value="SAP"/>
    <property type="match status" value="1"/>
</dbReference>
<dbReference type="SMART" id="SM00360">
    <property type="entry name" value="RRM"/>
    <property type="match status" value="1"/>
</dbReference>
<dbReference type="SMART" id="SM00513">
    <property type="entry name" value="SAP"/>
    <property type="match status" value="1"/>
</dbReference>
<dbReference type="SUPFAM" id="SSF54928">
    <property type="entry name" value="RNA-binding domain, RBD"/>
    <property type="match status" value="1"/>
</dbReference>
<dbReference type="SUPFAM" id="SSF68906">
    <property type="entry name" value="SAP domain"/>
    <property type="match status" value="1"/>
</dbReference>
<dbReference type="PROSITE" id="PS50102">
    <property type="entry name" value="RRM"/>
    <property type="match status" value="1"/>
</dbReference>
<dbReference type="PROSITE" id="PS50800">
    <property type="entry name" value="SAP"/>
    <property type="match status" value="1"/>
</dbReference>
<sequence>MAETLSGLGDSGAAGAAALSSASSETGTRRLSDLRVIDLRAELRKRNVDSSGNKSVLMERLKKAIEDEGGNPDEIEITSEGNKKTSKRSSKGRKPEEEGVEDNGLEENSGDGQEDVETSLENLQDIDIMDISVLDEAEIDNGSVADCVEDDDADNLQESLSDSRELVEGEMKELPEQLQEHAIEDKETINNLDTSSSDFTILQEIEEPSLEPENEKILDILGETCKSEPVKEESSELEQPFAQDTSSVGPDRKLAEEEDLFDSAHPEEGDLDLASESTAHAQSSKADSLLAVVKREPAEQPGDGERTDCEPVGLEPAVEQSSAASELAEASSEELAEAPTEAPSPEARDSKEDGRKFDFDACNEVPPAPKESSTSEGADQKMSSPEDDSDTKRLSKEEKGRSSCGRNFWVSGLSSTTRATDLKNLFSKYGKVVGAKVVTNARSPGARCYGFVTMSTAEEATKCINHLHKTELHGKMISVEKAKNEPVGKKTSDKRDSDGKKEKSSNSDRSTNLKRDDKCDRKDDAKKGDDGSGEKSKDQDDQKPGPSERSRATKSGSRGTERTVVMDKSKGVPVISVKTSGSKERASKSQDRKSASREKRSVVSFDKVKEPRKSRDSESHSRVRERSEREQRMQAQWEREERERLEIARERLAFQRQRLERERMERERLERERMHVEHERRREQERIHREREELRRQQELRYEQERRPAVRRPYDLDRRDDAYWPEAKRAALDERYHSDFNRQDRFHDFDHRDRGRYPDHSVDRREGSRSMMGEREGQHYPERHGGPERHGRDSRDGWGGYGSDKRMSEGRGLPPPPRRDWGDHGRREDDRSWQGTADGGMMDRDHKRWQGGERSMSGHSGPGHMMNRGGMSGRGSFAPGGASRGHPIPHGGMQGGFGGQSRGSRPSDARFTRRY</sequence>
<accession>Q15424</accession>
<accession>A0AV56</accession>
<accession>B7Z5B6</accession>
<accession>B7ZLP6</accession>
<accession>F5H0H3</accession>
<accession>O60406</accession>
<accession>Q59HH8</accession>
<protein>
    <recommendedName>
        <fullName>Scaffold attachment factor B1</fullName>
        <shortName>SAF-B</shortName>
        <shortName>SAF-B1</shortName>
    </recommendedName>
    <alternativeName>
        <fullName>HSP27 estrogen response element-TATA box-binding protein</fullName>
        <shortName>HSP27 ERE-TATA-binding protein</shortName>
    </alternativeName>
</protein>
<proteinExistence type="evidence at protein level"/>
<feature type="initiator methionine" description="Removed" evidence="13 22 24 25 26 27">
    <location>
        <position position="1"/>
    </location>
</feature>
<feature type="chain" id="PRO_0000081905" description="Scaffold attachment factor B1">
    <location>
        <begin position="2"/>
        <end position="915"/>
    </location>
</feature>
<feature type="domain" description="SAP" evidence="5">
    <location>
        <begin position="31"/>
        <end position="65"/>
    </location>
</feature>
<feature type="domain" description="RRM" evidence="4">
    <location>
        <begin position="406"/>
        <end position="484"/>
    </location>
</feature>
<feature type="region of interest" description="Disordered" evidence="6">
    <location>
        <begin position="1"/>
        <end position="33"/>
    </location>
</feature>
<feature type="region of interest" description="Disordered" evidence="6">
    <location>
        <begin position="64"/>
        <end position="118"/>
    </location>
</feature>
<feature type="region of interest" description="Disordered" evidence="6">
    <location>
        <begin position="221"/>
        <end position="407"/>
    </location>
</feature>
<feature type="region of interest" description="Disordered" evidence="6">
    <location>
        <begin position="477"/>
        <end position="641"/>
    </location>
</feature>
<feature type="region of interest" description="Interaction with POLR2A. Interaction with SFRS1; SFRS9 and SFRS10" evidence="2 12">
    <location>
        <begin position="528"/>
        <end position="792"/>
    </location>
</feature>
<feature type="region of interest" description="Interaction with SAFB2" evidence="7">
    <location>
        <begin position="599"/>
        <end position="915"/>
    </location>
</feature>
<feature type="region of interest" description="Disordered" evidence="6">
    <location>
        <begin position="671"/>
        <end position="708"/>
    </location>
</feature>
<feature type="region of interest" description="Disordered" evidence="6">
    <location>
        <begin position="749"/>
        <end position="915"/>
    </location>
</feature>
<feature type="short sequence motif" description="Nuclear localization signal" evidence="3">
    <location>
        <begin position="599"/>
        <end position="616"/>
    </location>
</feature>
<feature type="compositionally biased region" description="Low complexity" evidence="6">
    <location>
        <begin position="1"/>
        <end position="24"/>
    </location>
</feature>
<feature type="compositionally biased region" description="Acidic residues" evidence="6">
    <location>
        <begin position="67"/>
        <end position="77"/>
    </location>
</feature>
<feature type="compositionally biased region" description="Acidic residues" evidence="6">
    <location>
        <begin position="98"/>
        <end position="118"/>
    </location>
</feature>
<feature type="compositionally biased region" description="Basic and acidic residues" evidence="6">
    <location>
        <begin position="225"/>
        <end position="234"/>
    </location>
</feature>
<feature type="compositionally biased region" description="Polar residues" evidence="6">
    <location>
        <begin position="275"/>
        <end position="286"/>
    </location>
</feature>
<feature type="compositionally biased region" description="Basic and acidic residues" evidence="6">
    <location>
        <begin position="293"/>
        <end position="309"/>
    </location>
</feature>
<feature type="compositionally biased region" description="Low complexity" evidence="6">
    <location>
        <begin position="319"/>
        <end position="330"/>
    </location>
</feature>
<feature type="compositionally biased region" description="Basic and acidic residues" evidence="6">
    <location>
        <begin position="346"/>
        <end position="359"/>
    </location>
</feature>
<feature type="compositionally biased region" description="Polar residues" evidence="6">
    <location>
        <begin position="371"/>
        <end position="383"/>
    </location>
</feature>
<feature type="compositionally biased region" description="Basic and acidic residues" evidence="6">
    <location>
        <begin position="390"/>
        <end position="401"/>
    </location>
</feature>
<feature type="compositionally biased region" description="Basic and acidic residues" evidence="6">
    <location>
        <begin position="477"/>
        <end position="551"/>
    </location>
</feature>
<feature type="compositionally biased region" description="Basic and acidic residues" evidence="6">
    <location>
        <begin position="559"/>
        <end position="570"/>
    </location>
</feature>
<feature type="compositionally biased region" description="Basic and acidic residues" evidence="6">
    <location>
        <begin position="581"/>
        <end position="641"/>
    </location>
</feature>
<feature type="compositionally biased region" description="Basic and acidic residues" evidence="6">
    <location>
        <begin position="749"/>
        <end position="796"/>
    </location>
</feature>
<feature type="compositionally biased region" description="Basic and acidic residues" evidence="6">
    <location>
        <begin position="817"/>
        <end position="832"/>
    </location>
</feature>
<feature type="compositionally biased region" description="Basic and acidic residues" evidence="6">
    <location>
        <begin position="841"/>
        <end position="851"/>
    </location>
</feature>
<feature type="compositionally biased region" description="Gly residues" evidence="6">
    <location>
        <begin position="892"/>
        <end position="901"/>
    </location>
</feature>
<feature type="compositionally biased region" description="Basic and acidic residues" evidence="6">
    <location>
        <begin position="905"/>
        <end position="915"/>
    </location>
</feature>
<feature type="modified residue" description="N-acetylalanine" evidence="13 22 24 25 26 27">
    <location>
        <position position="2"/>
    </location>
</feature>
<feature type="modified residue" description="Phosphoserine" evidence="2">
    <location>
        <position position="24"/>
    </location>
</feature>
<feature type="modified residue" description="Phosphoserine" evidence="21 28">
    <location>
        <position position="55"/>
    </location>
</feature>
<feature type="modified residue" description="Phosphoserine" evidence="28">
    <location>
        <position position="79"/>
    </location>
</feature>
<feature type="modified residue" description="Phosphothreonine" evidence="30">
    <location>
        <position position="188"/>
    </location>
</feature>
<feature type="modified residue" description="Phosphoserine" evidence="30">
    <location>
        <position position="195"/>
    </location>
</feature>
<feature type="modified residue" description="Phosphoserine" evidence="30">
    <location>
        <position position="197"/>
    </location>
</feature>
<feature type="modified residue" description="Phosphoserine" evidence="2">
    <location>
        <position position="209"/>
    </location>
</feature>
<feature type="modified residue" description="Phosphoserine" evidence="21 24 25">
    <location>
        <position position="383"/>
    </location>
</feature>
<feature type="modified residue" description="Phosphoserine" evidence="21 24">
    <location>
        <position position="384"/>
    </location>
</feature>
<feature type="modified residue" description="Phosphoserine" evidence="24">
    <location>
        <position position="415"/>
    </location>
</feature>
<feature type="modified residue" description="Phosphoserine" evidence="24 28">
    <location>
        <position position="580"/>
    </location>
</feature>
<feature type="modified residue" description="Phosphoserine" evidence="24">
    <location>
        <position position="582"/>
    </location>
</feature>
<feature type="modified residue" description="Phosphoserine" evidence="18 24 25 28">
    <location>
        <position position="601"/>
    </location>
</feature>
<feature type="modified residue" description="Phosphoserine" evidence="18 19 20 24 25 28 30">
    <location>
        <position position="604"/>
    </location>
</feature>
<feature type="modified residue" description="N6-acetyllysine" evidence="23">
    <location>
        <position position="607"/>
    </location>
</feature>
<feature type="modified residue" description="Omega-N-methylarginine" evidence="29">
    <location>
        <position position="811"/>
    </location>
</feature>
<feature type="modified residue" description="Asymmetric dimethylarginine" evidence="29">
    <location>
        <position position="868"/>
    </location>
</feature>
<feature type="modified residue" description="Asymmetric dimethylarginine" evidence="29">
    <location>
        <position position="874"/>
    </location>
</feature>
<feature type="modified residue" description="Asymmetric dimethylarginine" evidence="29">
    <location>
        <position position="884"/>
    </location>
</feature>
<feature type="cross-link" description="Glycyl lysine isopeptide (Lys-Gly) (interchain with G-Cter in SUMO2)" evidence="32 34">
    <location>
        <position position="172"/>
    </location>
</feature>
<feature type="cross-link" description="Glycyl lysine isopeptide (Lys-Gly) (interchain with G-Cter in SUMO2)" evidence="34">
    <location>
        <position position="186"/>
    </location>
</feature>
<feature type="cross-link" description="Glycyl lysine isopeptide (Lys-Gly) (interchain with G-Cter in SUMO)" evidence="9">
    <location>
        <position position="231"/>
    </location>
</feature>
<feature type="cross-link" description="Glycyl lysine isopeptide (Lys-Gly) (interchain with G-Cter in SUMO)" evidence="9">
    <location>
        <position position="294"/>
    </location>
</feature>
<feature type="cross-link" description="Glycyl lysine isopeptide (Lys-Gly) (interchain with G-Cter in SUMO2)" evidence="34">
    <location>
        <position position="381"/>
    </location>
</feature>
<feature type="cross-link" description="Glycyl lysine isopeptide (Lys-Gly) (interchain with G-Cter in SUMO2)" evidence="34">
    <location>
        <position position="392"/>
    </location>
</feature>
<feature type="cross-link" description="Glycyl lysine isopeptide (Lys-Gly) (interchain with G-Cter in SUMO2)" evidence="33 34">
    <location>
        <position position="483"/>
    </location>
</feature>
<feature type="cross-link" description="Glycyl lysine isopeptide (Lys-Gly) (interchain with G-Cter in SUMO2)" evidence="34">
    <location>
        <position position="514"/>
    </location>
</feature>
<feature type="cross-link" description="Glycyl lysine isopeptide (Lys-Gly) (interchain with G-Cter in SUMO2)" evidence="32 33 34">
    <location>
        <position position="543"/>
    </location>
</feature>
<feature type="cross-link" description="Glycyl lysine isopeptide (Lys-Gly) (interchain with G-Cter in SUMO2)" evidence="34">
    <location>
        <position position="570"/>
    </location>
</feature>
<feature type="cross-link" description="Glycyl lysine isopeptide (Lys-Gly) (interchain with G-Cter in SUMO1); alternate" evidence="31">
    <location>
        <position position="578"/>
    </location>
</feature>
<feature type="cross-link" description="Glycyl lysine isopeptide (Lys-Gly) (interchain with G-Cter in SUMO2); alternate" evidence="33 34">
    <location>
        <position position="578"/>
    </location>
</feature>
<feature type="cross-link" description="Glycyl lysine isopeptide (Lys-Gly) (interchain with G-Cter in SUMO2)" evidence="34">
    <location>
        <position position="847"/>
    </location>
</feature>
<feature type="splice variant" id="VSP_045838" description="In isoform 2." evidence="14">
    <location>
        <begin position="114"/>
        <end position="182"/>
    </location>
</feature>
<feature type="splice variant" id="VSP_046902" description="In isoform 4." evidence="15 16">
    <location>
        <position position="621"/>
    </location>
</feature>
<feature type="splice variant" id="VSP_045839" description="In isoform 2, isoform 3 and isoform 4." evidence="14 15 16">
    <original>P</original>
    <variation>PRG</variation>
    <location>
        <position position="817"/>
    </location>
</feature>
<feature type="sequence conflict" description="In Ref. 1; AAC00056." evidence="17" ref="1">
    <original>A</original>
    <variation>P</variation>
    <location>
        <position position="16"/>
    </location>
</feature>
<feature type="sequence conflict" description="In Ref. 1; AAC00056." evidence="17" ref="1">
    <original>EL</original>
    <variation>DV</variation>
    <location>
        <begin position="42"/>
        <end position="43"/>
    </location>
</feature>
<feature type="sequence conflict" description="In Ref. 2; BAH12852." evidence="17" ref="2">
    <original>S</original>
    <variation>P</variation>
    <location>
        <position position="197"/>
    </location>
</feature>
<feature type="sequence conflict" description="In Ref. 2; BAH12852." evidence="17" ref="2">
    <original>C</original>
    <variation>Y</variation>
    <location>
        <position position="463"/>
    </location>
</feature>
<feature type="sequence conflict" description="In Ref. 2; BAH12852." evidence="17" ref="2">
    <original>E</original>
    <variation>V</variation>
    <location>
        <position position="692"/>
    </location>
</feature>
<feature type="sequence conflict" description="In Ref. 1; AAC00056 and 7; AAC18697." evidence="17" ref="1 7">
    <original>A</original>
    <variation>G</variation>
    <location>
        <position position="731"/>
    </location>
</feature>
<feature type="sequence conflict" description="In Ref. 1; AAC00056 and 7; AAC18697." evidence="17" ref="1 7">
    <original>D</original>
    <variation>E</variation>
    <location>
        <position position="744"/>
    </location>
</feature>